<reference key="1">
    <citation type="submission" date="2009-02" db="EMBL/GenBank/DDBJ databases">
        <title>Genome sequence of Bacillus cereus 03BB102.</title>
        <authorList>
            <person name="Dodson R.J."/>
            <person name="Jackson P."/>
            <person name="Munk A.C."/>
            <person name="Brettin T."/>
            <person name="Bruce D."/>
            <person name="Detter C."/>
            <person name="Tapia R."/>
            <person name="Han C."/>
            <person name="Sutton G."/>
            <person name="Sims D."/>
        </authorList>
    </citation>
    <scope>NUCLEOTIDE SEQUENCE [LARGE SCALE GENOMIC DNA]</scope>
    <source>
        <strain>03BB102</strain>
    </source>
</reference>
<keyword id="KW-1003">Cell membrane</keyword>
<keyword id="KW-0472">Membrane</keyword>
<keyword id="KW-0812">Transmembrane</keyword>
<keyword id="KW-1133">Transmembrane helix</keyword>
<dbReference type="EMBL" id="CP001407">
    <property type="protein sequence ID" value="ACO30225.1"/>
    <property type="molecule type" value="Genomic_DNA"/>
</dbReference>
<dbReference type="RefSeq" id="WP_001038202.1">
    <property type="nucleotide sequence ID" value="NZ_CP009318.1"/>
</dbReference>
<dbReference type="SMR" id="C1EWN1"/>
<dbReference type="KEGG" id="bcx:BCA_2731"/>
<dbReference type="PATRIC" id="fig|572264.18.peg.2680"/>
<dbReference type="Proteomes" id="UP000002210">
    <property type="component" value="Chromosome"/>
</dbReference>
<dbReference type="GO" id="GO:0005886">
    <property type="term" value="C:plasma membrane"/>
    <property type="evidence" value="ECO:0007669"/>
    <property type="project" value="UniProtKB-SubCell"/>
</dbReference>
<dbReference type="Gene3D" id="1.10.1760.20">
    <property type="match status" value="1"/>
</dbReference>
<dbReference type="HAMAP" id="MF_01572">
    <property type="entry name" value="UPF0397"/>
    <property type="match status" value="1"/>
</dbReference>
<dbReference type="InterPro" id="IPR009825">
    <property type="entry name" value="ECF_substrate-spec-like"/>
</dbReference>
<dbReference type="InterPro" id="IPR022914">
    <property type="entry name" value="UPF0397"/>
</dbReference>
<dbReference type="NCBIfam" id="NF010182">
    <property type="entry name" value="PRK13661.1"/>
    <property type="match status" value="1"/>
</dbReference>
<dbReference type="PANTHER" id="PTHR37815">
    <property type="entry name" value="UPF0397 PROTEIN BC_2624-RELATED"/>
    <property type="match status" value="1"/>
</dbReference>
<dbReference type="PANTHER" id="PTHR37815:SF3">
    <property type="entry name" value="UPF0397 PROTEIN SPR0429"/>
    <property type="match status" value="1"/>
</dbReference>
<dbReference type="Pfam" id="PF07155">
    <property type="entry name" value="ECF-ribofla_trS"/>
    <property type="match status" value="1"/>
</dbReference>
<name>Y2731_BACC3</name>
<feature type="chain" id="PRO_1000185567" description="UPF0397 protein BCA_2731">
    <location>
        <begin position="1"/>
        <end position="182"/>
    </location>
</feature>
<feature type="transmembrane region" description="Helical" evidence="1">
    <location>
        <begin position="9"/>
        <end position="29"/>
    </location>
</feature>
<feature type="transmembrane region" description="Helical" evidence="1">
    <location>
        <begin position="40"/>
        <end position="60"/>
    </location>
</feature>
<feature type="transmembrane region" description="Helical" evidence="1">
    <location>
        <begin position="71"/>
        <end position="91"/>
    </location>
</feature>
<feature type="transmembrane region" description="Helical" evidence="1">
    <location>
        <begin position="114"/>
        <end position="134"/>
    </location>
</feature>
<feature type="transmembrane region" description="Helical" evidence="1">
    <location>
        <begin position="142"/>
        <end position="162"/>
    </location>
</feature>
<accession>C1EWN1</accession>
<gene>
    <name type="ordered locus">BCA_2731</name>
</gene>
<protein>
    <recommendedName>
        <fullName evidence="1">UPF0397 protein BCA_2731</fullName>
    </recommendedName>
</protein>
<proteinExistence type="inferred from homology"/>
<comment type="subcellular location">
    <subcellularLocation>
        <location evidence="1">Cell membrane</location>
        <topology evidence="1">Multi-pass membrane protein</topology>
    </subcellularLocation>
</comment>
<comment type="similarity">
    <text evidence="1">Belongs to the UPF0397 family.</text>
</comment>
<sequence length="182" mass="19105">MNKLSTKLVVAIGIGAALYGILGLWGFSIAPNTFIKPALAILTVFGALFGPVAGLLIGLIGHTVTDTIAGWGIWWGWVISSGIIGFAMGLIQKRVGFSVKNGTYNKGDISYLAITGLIGIVIAIIFAGAFDIIVMGEPFDKIVIQVLGATIADVIVFLVLGLPITIGLAKSNKKHTQLKIEK</sequence>
<organism>
    <name type="scientific">Bacillus cereus (strain 03BB102)</name>
    <dbReference type="NCBI Taxonomy" id="572264"/>
    <lineage>
        <taxon>Bacteria</taxon>
        <taxon>Bacillati</taxon>
        <taxon>Bacillota</taxon>
        <taxon>Bacilli</taxon>
        <taxon>Bacillales</taxon>
        <taxon>Bacillaceae</taxon>
        <taxon>Bacillus</taxon>
        <taxon>Bacillus cereus group</taxon>
    </lineage>
</organism>
<evidence type="ECO:0000255" key="1">
    <source>
        <dbReference type="HAMAP-Rule" id="MF_01572"/>
    </source>
</evidence>